<evidence type="ECO:0000255" key="1">
    <source>
        <dbReference type="HAMAP-Rule" id="MF_00607"/>
    </source>
</evidence>
<accession>A3Q5I0</accession>
<reference key="1">
    <citation type="submission" date="2007-02" db="EMBL/GenBank/DDBJ databases">
        <title>Complete sequence of Mycobacterium sp. JLS.</title>
        <authorList>
            <consortium name="US DOE Joint Genome Institute"/>
            <person name="Copeland A."/>
            <person name="Lucas S."/>
            <person name="Lapidus A."/>
            <person name="Barry K."/>
            <person name="Detter J.C."/>
            <person name="Glavina del Rio T."/>
            <person name="Hammon N."/>
            <person name="Israni S."/>
            <person name="Dalin E."/>
            <person name="Tice H."/>
            <person name="Pitluck S."/>
            <person name="Chain P."/>
            <person name="Malfatti S."/>
            <person name="Shin M."/>
            <person name="Vergez L."/>
            <person name="Schmutz J."/>
            <person name="Larimer F."/>
            <person name="Land M."/>
            <person name="Hauser L."/>
            <person name="Kyrpides N."/>
            <person name="Mikhailova N."/>
            <person name="Miller C.D."/>
            <person name="Anderson A.J."/>
            <person name="Sims R.C."/>
            <person name="Richardson P."/>
        </authorList>
    </citation>
    <scope>NUCLEOTIDE SEQUENCE [LARGE SCALE GENOMIC DNA]</scope>
    <source>
        <strain>JLS</strain>
    </source>
</reference>
<sequence length="294" mass="32704">MTIRLLGRTEIRRLAKDIDFRPRKSFGQNFVHDANTVRRIVSASGVHRHDHVLEVGPGLGSLTLALLDRGAHVTAVEIDPLLAQQLPTTIADHSHSEINRLTVLNQDILTLMPSDLENQPTALVANLPYNVAVPALLHLLAEFPTIRSVMVMVQAEVAERLAADPGGKDYGVPSAKVRFYGNVRRYGMVSPTVFWPIPRVYSGLVRIDRYETSPWPTDADFRAQVFDLIDIAFAQRRKTSRNAFAEWAGSGNESARRLLAASIDPSRRGETLAIADFVRLLQRSGEAEEQVRVQ</sequence>
<dbReference type="EC" id="2.1.1.182" evidence="1"/>
<dbReference type="EMBL" id="CP000580">
    <property type="protein sequence ID" value="ABO00408.1"/>
    <property type="molecule type" value="Genomic_DNA"/>
</dbReference>
<dbReference type="SMR" id="A3Q5I0"/>
<dbReference type="KEGG" id="mjl:Mjls_4642"/>
<dbReference type="HOGENOM" id="CLU_041220_1_1_11"/>
<dbReference type="BioCyc" id="MSP164757:G1G8C-4683-MONOMER"/>
<dbReference type="GO" id="GO:0005829">
    <property type="term" value="C:cytosol"/>
    <property type="evidence" value="ECO:0007669"/>
    <property type="project" value="TreeGrafter"/>
</dbReference>
<dbReference type="GO" id="GO:0052908">
    <property type="term" value="F:16S rRNA (adenine(1518)-N(6)/adenine(1519)-N(6))-dimethyltransferase activity"/>
    <property type="evidence" value="ECO:0007669"/>
    <property type="project" value="UniProtKB-EC"/>
</dbReference>
<dbReference type="GO" id="GO:0003723">
    <property type="term" value="F:RNA binding"/>
    <property type="evidence" value="ECO:0007669"/>
    <property type="project" value="UniProtKB-KW"/>
</dbReference>
<dbReference type="CDD" id="cd02440">
    <property type="entry name" value="AdoMet_MTases"/>
    <property type="match status" value="1"/>
</dbReference>
<dbReference type="FunFam" id="1.10.8.100:FF:000003">
    <property type="entry name" value="Ribosomal RNA small subunit methyltransferase A"/>
    <property type="match status" value="1"/>
</dbReference>
<dbReference type="FunFam" id="3.40.50.150:FF:000023">
    <property type="entry name" value="Ribosomal RNA small subunit methyltransferase A"/>
    <property type="match status" value="1"/>
</dbReference>
<dbReference type="Gene3D" id="1.10.8.100">
    <property type="entry name" value="Ribosomal RNA adenine dimethylase-like, domain 2"/>
    <property type="match status" value="1"/>
</dbReference>
<dbReference type="Gene3D" id="3.40.50.150">
    <property type="entry name" value="Vaccinia Virus protein VP39"/>
    <property type="match status" value="1"/>
</dbReference>
<dbReference type="HAMAP" id="MF_00607">
    <property type="entry name" value="16SrRNA_methyltr_A"/>
    <property type="match status" value="1"/>
</dbReference>
<dbReference type="InterPro" id="IPR001737">
    <property type="entry name" value="KsgA/Erm"/>
</dbReference>
<dbReference type="InterPro" id="IPR023165">
    <property type="entry name" value="rRNA_Ade_diMease-like_C"/>
</dbReference>
<dbReference type="InterPro" id="IPR020596">
    <property type="entry name" value="rRNA_Ade_Mease_Trfase_CS"/>
</dbReference>
<dbReference type="InterPro" id="IPR020598">
    <property type="entry name" value="rRNA_Ade_methylase_Trfase_N"/>
</dbReference>
<dbReference type="InterPro" id="IPR011530">
    <property type="entry name" value="rRNA_adenine_dimethylase"/>
</dbReference>
<dbReference type="InterPro" id="IPR029063">
    <property type="entry name" value="SAM-dependent_MTases_sf"/>
</dbReference>
<dbReference type="NCBIfam" id="TIGR00755">
    <property type="entry name" value="ksgA"/>
    <property type="match status" value="1"/>
</dbReference>
<dbReference type="PANTHER" id="PTHR11727">
    <property type="entry name" value="DIMETHYLADENOSINE TRANSFERASE"/>
    <property type="match status" value="1"/>
</dbReference>
<dbReference type="PANTHER" id="PTHR11727:SF7">
    <property type="entry name" value="DIMETHYLADENOSINE TRANSFERASE-RELATED"/>
    <property type="match status" value="1"/>
</dbReference>
<dbReference type="Pfam" id="PF00398">
    <property type="entry name" value="RrnaAD"/>
    <property type="match status" value="1"/>
</dbReference>
<dbReference type="SMART" id="SM00650">
    <property type="entry name" value="rADc"/>
    <property type="match status" value="1"/>
</dbReference>
<dbReference type="SUPFAM" id="SSF53335">
    <property type="entry name" value="S-adenosyl-L-methionine-dependent methyltransferases"/>
    <property type="match status" value="1"/>
</dbReference>
<dbReference type="PROSITE" id="PS01131">
    <property type="entry name" value="RRNA_A_DIMETH"/>
    <property type="match status" value="1"/>
</dbReference>
<dbReference type="PROSITE" id="PS51689">
    <property type="entry name" value="SAM_RNA_A_N6_MT"/>
    <property type="match status" value="1"/>
</dbReference>
<comment type="function">
    <text evidence="1">Specifically dimethylates two adjacent adenosines (A1518 and A1519) in the loop of a conserved hairpin near the 3'-end of 16S rRNA in the 30S particle. May play a critical role in biogenesis of 30S subunits.</text>
</comment>
<comment type="catalytic activity">
    <reaction evidence="1">
        <text>adenosine(1518)/adenosine(1519) in 16S rRNA + 4 S-adenosyl-L-methionine = N(6)-dimethyladenosine(1518)/N(6)-dimethyladenosine(1519) in 16S rRNA + 4 S-adenosyl-L-homocysteine + 4 H(+)</text>
        <dbReference type="Rhea" id="RHEA:19609"/>
        <dbReference type="Rhea" id="RHEA-COMP:10232"/>
        <dbReference type="Rhea" id="RHEA-COMP:10233"/>
        <dbReference type="ChEBI" id="CHEBI:15378"/>
        <dbReference type="ChEBI" id="CHEBI:57856"/>
        <dbReference type="ChEBI" id="CHEBI:59789"/>
        <dbReference type="ChEBI" id="CHEBI:74411"/>
        <dbReference type="ChEBI" id="CHEBI:74493"/>
        <dbReference type="EC" id="2.1.1.182"/>
    </reaction>
</comment>
<comment type="subcellular location">
    <subcellularLocation>
        <location evidence="1">Cytoplasm</location>
    </subcellularLocation>
</comment>
<comment type="similarity">
    <text evidence="1">Belongs to the class I-like SAM-binding methyltransferase superfamily. rRNA adenine N(6)-methyltransferase family. RsmA subfamily.</text>
</comment>
<organism>
    <name type="scientific">Mycobacterium sp. (strain JLS)</name>
    <dbReference type="NCBI Taxonomy" id="164757"/>
    <lineage>
        <taxon>Bacteria</taxon>
        <taxon>Bacillati</taxon>
        <taxon>Actinomycetota</taxon>
        <taxon>Actinomycetes</taxon>
        <taxon>Mycobacteriales</taxon>
        <taxon>Mycobacteriaceae</taxon>
        <taxon>Mycobacterium</taxon>
    </lineage>
</organism>
<keyword id="KW-0963">Cytoplasm</keyword>
<keyword id="KW-0489">Methyltransferase</keyword>
<keyword id="KW-0694">RNA-binding</keyword>
<keyword id="KW-0698">rRNA processing</keyword>
<keyword id="KW-0949">S-adenosyl-L-methionine</keyword>
<keyword id="KW-0808">Transferase</keyword>
<protein>
    <recommendedName>
        <fullName evidence="1">Ribosomal RNA small subunit methyltransferase A</fullName>
        <ecNumber evidence="1">2.1.1.182</ecNumber>
    </recommendedName>
    <alternativeName>
        <fullName evidence="1">16S rRNA (adenine(1518)-N(6)/adenine(1519)-N(6))-dimethyltransferase</fullName>
    </alternativeName>
    <alternativeName>
        <fullName evidence="1">16S rRNA dimethyladenosine transferase</fullName>
    </alternativeName>
    <alternativeName>
        <fullName evidence="1">16S rRNA dimethylase</fullName>
    </alternativeName>
    <alternativeName>
        <fullName evidence="1">S-adenosylmethionine-6-N', N'-adenosyl(rRNA) dimethyltransferase</fullName>
    </alternativeName>
</protein>
<name>RSMA_MYCSJ</name>
<feature type="chain" id="PRO_1000130296" description="Ribosomal RNA small subunit methyltransferase A">
    <location>
        <begin position="1"/>
        <end position="294"/>
    </location>
</feature>
<feature type="binding site" evidence="1">
    <location>
        <position position="29"/>
    </location>
    <ligand>
        <name>S-adenosyl-L-methionine</name>
        <dbReference type="ChEBI" id="CHEBI:59789"/>
    </ligand>
</feature>
<feature type="binding site" evidence="1">
    <location>
        <position position="31"/>
    </location>
    <ligand>
        <name>S-adenosyl-L-methionine</name>
        <dbReference type="ChEBI" id="CHEBI:59789"/>
    </ligand>
</feature>
<feature type="binding site" evidence="1">
    <location>
        <position position="56"/>
    </location>
    <ligand>
        <name>S-adenosyl-L-methionine</name>
        <dbReference type="ChEBI" id="CHEBI:59789"/>
    </ligand>
</feature>
<feature type="binding site" evidence="1">
    <location>
        <position position="77"/>
    </location>
    <ligand>
        <name>S-adenosyl-L-methionine</name>
        <dbReference type="ChEBI" id="CHEBI:59789"/>
    </ligand>
</feature>
<feature type="binding site" evidence="1">
    <location>
        <position position="107"/>
    </location>
    <ligand>
        <name>S-adenosyl-L-methionine</name>
        <dbReference type="ChEBI" id="CHEBI:59789"/>
    </ligand>
</feature>
<feature type="binding site" evidence="1">
    <location>
        <position position="126"/>
    </location>
    <ligand>
        <name>S-adenosyl-L-methionine</name>
        <dbReference type="ChEBI" id="CHEBI:59789"/>
    </ligand>
</feature>
<proteinExistence type="inferred from homology"/>
<gene>
    <name evidence="1" type="primary">rsmA</name>
    <name evidence="1" type="synonym">ksgA</name>
    <name type="ordered locus">Mjls_4642</name>
</gene>